<sequence>MKKKLFGTDGVRGVANIYPMTTEIAMQLGRAAAHIFKKDHTRRHRIVIGKDTRLSGYMIENALVAGICSMGVDVLLVGPLPTPGIAFITSSMRADAGVVISASHNPYQDNGIKFFSADGFKLPDTTELEIEKLIFGNEIDSLRPVADEVGKAFRMDDAGGRYIVFLKNSFPQDLDLNGLKIVLDCANGAAYKVAPAVLEELGAEVVTLGVKPNGSNINAGCGSLYPESLAKAVKEHGAHLGMALDGDADRVIFVDEQGQEVDGDQIMAICSLDMMKQGKLAHNTLVSTVMSNMGLDIALRNAGGQVVKTAVGDRYVVEEMRRGGYNLGGEQSGHMIFLDYNTTGDGMVSALQLLAIMQRTGKPLSELAGVMTALPQVLINVRVASRQDINIVPEIARTVKAVEEKLADTGRVLIRYSGTEPLLRIMLEGQDEAEITGLAQEIADVIERHLGVRTKEQ</sequence>
<evidence type="ECO:0000255" key="1">
    <source>
        <dbReference type="HAMAP-Rule" id="MF_01554"/>
    </source>
</evidence>
<reference key="1">
    <citation type="submission" date="2005-10" db="EMBL/GenBank/DDBJ databases">
        <title>Complete sequence of Pelobacter carbinolicus DSM 2380.</title>
        <authorList>
            <person name="Copeland A."/>
            <person name="Lucas S."/>
            <person name="Lapidus A."/>
            <person name="Barry K."/>
            <person name="Detter J.C."/>
            <person name="Glavina T."/>
            <person name="Hammon N."/>
            <person name="Israni S."/>
            <person name="Pitluck S."/>
            <person name="Chertkov O."/>
            <person name="Schmutz J."/>
            <person name="Larimer F."/>
            <person name="Land M."/>
            <person name="Kyrpides N."/>
            <person name="Ivanova N."/>
            <person name="Richardson P."/>
        </authorList>
    </citation>
    <scope>NUCLEOTIDE SEQUENCE [LARGE SCALE GENOMIC DNA]</scope>
    <source>
        <strain>DSM 2380 / NBRC 103641 / GraBd1</strain>
    </source>
</reference>
<comment type="function">
    <text evidence="1">Catalyzes the conversion of glucosamine-6-phosphate to glucosamine-1-phosphate.</text>
</comment>
<comment type="catalytic activity">
    <reaction evidence="1">
        <text>alpha-D-glucosamine 1-phosphate = D-glucosamine 6-phosphate</text>
        <dbReference type="Rhea" id="RHEA:23424"/>
        <dbReference type="ChEBI" id="CHEBI:58516"/>
        <dbReference type="ChEBI" id="CHEBI:58725"/>
        <dbReference type="EC" id="5.4.2.10"/>
    </reaction>
</comment>
<comment type="cofactor">
    <cofactor evidence="1">
        <name>Mg(2+)</name>
        <dbReference type="ChEBI" id="CHEBI:18420"/>
    </cofactor>
    <text evidence="1">Binds 1 Mg(2+) ion per subunit.</text>
</comment>
<comment type="PTM">
    <text evidence="1">Activated by phosphorylation.</text>
</comment>
<comment type="similarity">
    <text evidence="1">Belongs to the phosphohexose mutase family.</text>
</comment>
<accession>Q3A5V5</accession>
<protein>
    <recommendedName>
        <fullName evidence="1">Phosphoglucosamine mutase</fullName>
        <ecNumber evidence="1">5.4.2.10</ecNumber>
    </recommendedName>
</protein>
<proteinExistence type="inferred from homology"/>
<name>GLMM_SYNC1</name>
<keyword id="KW-0413">Isomerase</keyword>
<keyword id="KW-0460">Magnesium</keyword>
<keyword id="KW-0479">Metal-binding</keyword>
<keyword id="KW-0597">Phosphoprotein</keyword>
<keyword id="KW-1185">Reference proteome</keyword>
<feature type="chain" id="PRO_0000305660" description="Phosphoglucosamine mutase">
    <location>
        <begin position="1"/>
        <end position="457"/>
    </location>
</feature>
<feature type="active site" description="Phosphoserine intermediate" evidence="1">
    <location>
        <position position="103"/>
    </location>
</feature>
<feature type="binding site" description="via phosphate group" evidence="1">
    <location>
        <position position="103"/>
    </location>
    <ligand>
        <name>Mg(2+)</name>
        <dbReference type="ChEBI" id="CHEBI:18420"/>
    </ligand>
</feature>
<feature type="binding site" evidence="1">
    <location>
        <position position="245"/>
    </location>
    <ligand>
        <name>Mg(2+)</name>
        <dbReference type="ChEBI" id="CHEBI:18420"/>
    </ligand>
</feature>
<feature type="binding site" evidence="1">
    <location>
        <position position="247"/>
    </location>
    <ligand>
        <name>Mg(2+)</name>
        <dbReference type="ChEBI" id="CHEBI:18420"/>
    </ligand>
</feature>
<feature type="binding site" evidence="1">
    <location>
        <position position="249"/>
    </location>
    <ligand>
        <name>Mg(2+)</name>
        <dbReference type="ChEBI" id="CHEBI:18420"/>
    </ligand>
</feature>
<feature type="modified residue" description="Phosphoserine" evidence="1">
    <location>
        <position position="103"/>
    </location>
</feature>
<gene>
    <name evidence="1" type="primary">glmM</name>
    <name type="ordered locus">Pcar_1001</name>
</gene>
<organism>
    <name type="scientific">Syntrophotalea carbinolica (strain DSM 2380 / NBRC 103641 / GraBd1)</name>
    <name type="common">Pelobacter carbinolicus</name>
    <dbReference type="NCBI Taxonomy" id="338963"/>
    <lineage>
        <taxon>Bacteria</taxon>
        <taxon>Pseudomonadati</taxon>
        <taxon>Thermodesulfobacteriota</taxon>
        <taxon>Desulfuromonadia</taxon>
        <taxon>Desulfuromonadales</taxon>
        <taxon>Syntrophotaleaceae</taxon>
        <taxon>Syntrophotalea</taxon>
    </lineage>
</organism>
<dbReference type="EC" id="5.4.2.10" evidence="1"/>
<dbReference type="EMBL" id="CP000142">
    <property type="protein sequence ID" value="ABA88252.2"/>
    <property type="molecule type" value="Genomic_DNA"/>
</dbReference>
<dbReference type="RefSeq" id="WP_011340720.1">
    <property type="nucleotide sequence ID" value="NC_007498.2"/>
</dbReference>
<dbReference type="SMR" id="Q3A5V5"/>
<dbReference type="STRING" id="338963.Pcar_1001"/>
<dbReference type="KEGG" id="pca:Pcar_1001"/>
<dbReference type="eggNOG" id="COG1109">
    <property type="taxonomic scope" value="Bacteria"/>
</dbReference>
<dbReference type="HOGENOM" id="CLU_016950_7_0_7"/>
<dbReference type="OrthoDB" id="9806956at2"/>
<dbReference type="Proteomes" id="UP000002534">
    <property type="component" value="Chromosome"/>
</dbReference>
<dbReference type="GO" id="GO:0005829">
    <property type="term" value="C:cytosol"/>
    <property type="evidence" value="ECO:0007669"/>
    <property type="project" value="TreeGrafter"/>
</dbReference>
<dbReference type="GO" id="GO:0000287">
    <property type="term" value="F:magnesium ion binding"/>
    <property type="evidence" value="ECO:0007669"/>
    <property type="project" value="UniProtKB-UniRule"/>
</dbReference>
<dbReference type="GO" id="GO:0008966">
    <property type="term" value="F:phosphoglucosamine mutase activity"/>
    <property type="evidence" value="ECO:0007669"/>
    <property type="project" value="UniProtKB-UniRule"/>
</dbReference>
<dbReference type="GO" id="GO:0004615">
    <property type="term" value="F:phosphomannomutase activity"/>
    <property type="evidence" value="ECO:0007669"/>
    <property type="project" value="TreeGrafter"/>
</dbReference>
<dbReference type="GO" id="GO:0005975">
    <property type="term" value="P:carbohydrate metabolic process"/>
    <property type="evidence" value="ECO:0007669"/>
    <property type="project" value="InterPro"/>
</dbReference>
<dbReference type="GO" id="GO:0009252">
    <property type="term" value="P:peptidoglycan biosynthetic process"/>
    <property type="evidence" value="ECO:0007669"/>
    <property type="project" value="TreeGrafter"/>
</dbReference>
<dbReference type="GO" id="GO:0006048">
    <property type="term" value="P:UDP-N-acetylglucosamine biosynthetic process"/>
    <property type="evidence" value="ECO:0007669"/>
    <property type="project" value="TreeGrafter"/>
</dbReference>
<dbReference type="CDD" id="cd05802">
    <property type="entry name" value="GlmM"/>
    <property type="match status" value="1"/>
</dbReference>
<dbReference type="FunFam" id="3.30.310.50:FF:000001">
    <property type="entry name" value="Phosphoglucosamine mutase"/>
    <property type="match status" value="1"/>
</dbReference>
<dbReference type="FunFam" id="3.40.120.10:FF:000001">
    <property type="entry name" value="Phosphoglucosamine mutase"/>
    <property type="match status" value="1"/>
</dbReference>
<dbReference type="FunFam" id="3.40.120.10:FF:000002">
    <property type="entry name" value="Phosphoglucosamine mutase"/>
    <property type="match status" value="1"/>
</dbReference>
<dbReference type="Gene3D" id="3.40.120.10">
    <property type="entry name" value="Alpha-D-Glucose-1,6-Bisphosphate, subunit A, domain 3"/>
    <property type="match status" value="3"/>
</dbReference>
<dbReference type="Gene3D" id="3.30.310.50">
    <property type="entry name" value="Alpha-D-phosphohexomutase, C-terminal domain"/>
    <property type="match status" value="1"/>
</dbReference>
<dbReference type="HAMAP" id="MF_01554_B">
    <property type="entry name" value="GlmM_B"/>
    <property type="match status" value="1"/>
</dbReference>
<dbReference type="InterPro" id="IPR005844">
    <property type="entry name" value="A-D-PHexomutase_a/b/a-I"/>
</dbReference>
<dbReference type="InterPro" id="IPR016055">
    <property type="entry name" value="A-D-PHexomutase_a/b/a-I/II/III"/>
</dbReference>
<dbReference type="InterPro" id="IPR005845">
    <property type="entry name" value="A-D-PHexomutase_a/b/a-II"/>
</dbReference>
<dbReference type="InterPro" id="IPR005846">
    <property type="entry name" value="A-D-PHexomutase_a/b/a-III"/>
</dbReference>
<dbReference type="InterPro" id="IPR005843">
    <property type="entry name" value="A-D-PHexomutase_C"/>
</dbReference>
<dbReference type="InterPro" id="IPR036900">
    <property type="entry name" value="A-D-PHexomutase_C_sf"/>
</dbReference>
<dbReference type="InterPro" id="IPR016066">
    <property type="entry name" value="A-D-PHexomutase_CS"/>
</dbReference>
<dbReference type="InterPro" id="IPR005841">
    <property type="entry name" value="Alpha-D-phosphohexomutase_SF"/>
</dbReference>
<dbReference type="InterPro" id="IPR006352">
    <property type="entry name" value="GlmM_bact"/>
</dbReference>
<dbReference type="InterPro" id="IPR050060">
    <property type="entry name" value="Phosphoglucosamine_mutase"/>
</dbReference>
<dbReference type="NCBIfam" id="TIGR01455">
    <property type="entry name" value="glmM"/>
    <property type="match status" value="1"/>
</dbReference>
<dbReference type="NCBIfam" id="NF008139">
    <property type="entry name" value="PRK10887.1"/>
    <property type="match status" value="1"/>
</dbReference>
<dbReference type="PANTHER" id="PTHR42946:SF1">
    <property type="entry name" value="PHOSPHOGLUCOMUTASE (ALPHA-D-GLUCOSE-1,6-BISPHOSPHATE-DEPENDENT)"/>
    <property type="match status" value="1"/>
</dbReference>
<dbReference type="PANTHER" id="PTHR42946">
    <property type="entry name" value="PHOSPHOHEXOSE MUTASE"/>
    <property type="match status" value="1"/>
</dbReference>
<dbReference type="Pfam" id="PF02878">
    <property type="entry name" value="PGM_PMM_I"/>
    <property type="match status" value="1"/>
</dbReference>
<dbReference type="Pfam" id="PF02879">
    <property type="entry name" value="PGM_PMM_II"/>
    <property type="match status" value="1"/>
</dbReference>
<dbReference type="Pfam" id="PF02880">
    <property type="entry name" value="PGM_PMM_III"/>
    <property type="match status" value="1"/>
</dbReference>
<dbReference type="Pfam" id="PF00408">
    <property type="entry name" value="PGM_PMM_IV"/>
    <property type="match status" value="1"/>
</dbReference>
<dbReference type="PRINTS" id="PR00509">
    <property type="entry name" value="PGMPMM"/>
</dbReference>
<dbReference type="SUPFAM" id="SSF55957">
    <property type="entry name" value="Phosphoglucomutase, C-terminal domain"/>
    <property type="match status" value="1"/>
</dbReference>
<dbReference type="SUPFAM" id="SSF53738">
    <property type="entry name" value="Phosphoglucomutase, first 3 domains"/>
    <property type="match status" value="3"/>
</dbReference>
<dbReference type="PROSITE" id="PS00710">
    <property type="entry name" value="PGM_PMM"/>
    <property type="match status" value="1"/>
</dbReference>